<protein>
    <recommendedName>
        <fullName evidence="1">Uroporphyrinogen decarboxylase</fullName>
        <shortName evidence="1">UPD</shortName>
        <shortName evidence="1">URO-D</shortName>
        <ecNumber evidence="1">4.1.1.37</ecNumber>
    </recommendedName>
</protein>
<evidence type="ECO:0000255" key="1">
    <source>
        <dbReference type="HAMAP-Rule" id="MF_00218"/>
    </source>
</evidence>
<feature type="chain" id="PRO_1000197516" description="Uroporphyrinogen decarboxylase">
    <location>
        <begin position="1"/>
        <end position="370"/>
    </location>
</feature>
<feature type="binding site" evidence="1">
    <location>
        <begin position="29"/>
        <end position="33"/>
    </location>
    <ligand>
        <name>substrate</name>
    </ligand>
</feature>
<feature type="binding site" evidence="1">
    <location>
        <position position="79"/>
    </location>
    <ligand>
        <name>substrate</name>
    </ligand>
</feature>
<feature type="binding site" evidence="1">
    <location>
        <position position="155"/>
    </location>
    <ligand>
        <name>substrate</name>
    </ligand>
</feature>
<feature type="binding site" evidence="1">
    <location>
        <position position="210"/>
    </location>
    <ligand>
        <name>substrate</name>
    </ligand>
</feature>
<feature type="binding site" evidence="1">
    <location>
        <position position="342"/>
    </location>
    <ligand>
        <name>substrate</name>
    </ligand>
</feature>
<feature type="site" description="Transition state stabilizer" evidence="1">
    <location>
        <position position="79"/>
    </location>
</feature>
<reference key="1">
    <citation type="submission" date="2009-01" db="EMBL/GenBank/DDBJ databases">
        <title>Complete sequence of Diaphorobacter sp. TPSY.</title>
        <authorList>
            <consortium name="US DOE Joint Genome Institute"/>
            <person name="Lucas S."/>
            <person name="Copeland A."/>
            <person name="Lapidus A."/>
            <person name="Glavina del Rio T."/>
            <person name="Tice H."/>
            <person name="Bruce D."/>
            <person name="Goodwin L."/>
            <person name="Pitluck S."/>
            <person name="Chertkov O."/>
            <person name="Brettin T."/>
            <person name="Detter J.C."/>
            <person name="Han C."/>
            <person name="Larimer F."/>
            <person name="Land M."/>
            <person name="Hauser L."/>
            <person name="Kyrpides N."/>
            <person name="Mikhailova N."/>
            <person name="Coates J.D."/>
        </authorList>
    </citation>
    <scope>NUCLEOTIDE SEQUENCE [LARGE SCALE GENOMIC DNA]</scope>
    <source>
        <strain>TPSY</strain>
    </source>
</reference>
<keyword id="KW-0963">Cytoplasm</keyword>
<keyword id="KW-0210">Decarboxylase</keyword>
<keyword id="KW-0456">Lyase</keyword>
<keyword id="KW-0627">Porphyrin biosynthesis</keyword>
<keyword id="KW-1185">Reference proteome</keyword>
<accession>B9MGH2</accession>
<name>DCUP_ACIET</name>
<organism>
    <name type="scientific">Acidovorax ebreus (strain TPSY)</name>
    <name type="common">Diaphorobacter sp. (strain TPSY)</name>
    <dbReference type="NCBI Taxonomy" id="535289"/>
    <lineage>
        <taxon>Bacteria</taxon>
        <taxon>Pseudomonadati</taxon>
        <taxon>Pseudomonadota</taxon>
        <taxon>Betaproteobacteria</taxon>
        <taxon>Burkholderiales</taxon>
        <taxon>Comamonadaceae</taxon>
        <taxon>Diaphorobacter</taxon>
    </lineage>
</organism>
<comment type="function">
    <text evidence="1">Catalyzes the decarboxylation of four acetate groups of uroporphyrinogen-III to yield coproporphyrinogen-III.</text>
</comment>
<comment type="catalytic activity">
    <reaction evidence="1">
        <text>uroporphyrinogen III + 4 H(+) = coproporphyrinogen III + 4 CO2</text>
        <dbReference type="Rhea" id="RHEA:19865"/>
        <dbReference type="ChEBI" id="CHEBI:15378"/>
        <dbReference type="ChEBI" id="CHEBI:16526"/>
        <dbReference type="ChEBI" id="CHEBI:57308"/>
        <dbReference type="ChEBI" id="CHEBI:57309"/>
        <dbReference type="EC" id="4.1.1.37"/>
    </reaction>
</comment>
<comment type="pathway">
    <text evidence="1">Porphyrin-containing compound metabolism; protoporphyrin-IX biosynthesis; coproporphyrinogen-III from 5-aminolevulinate: step 4/4.</text>
</comment>
<comment type="subunit">
    <text evidence="1">Homodimer.</text>
</comment>
<comment type="subcellular location">
    <subcellularLocation>
        <location evidence="1">Cytoplasm</location>
    </subcellularLocation>
</comment>
<comment type="similarity">
    <text evidence="1">Belongs to the uroporphyrinogen decarboxylase family.</text>
</comment>
<sequence length="370" mass="40267">MSFAPLQNDTFLRACRRQATDYTPLWLMRQAGRYLPEYKATRAKAGSFMGLATNVEYATEVTLQPLERFPLDAAILFSDILTVPDAMGLGLSFAEGEGPRFAKAVRDEADVAALAVPDLDKLRYVFDAVTSIRRALNGRVPLIGFSGSPWTLACYMVEGKGSDDYRLVKTLMYSRPDLMHRILAVNADAVAAYLNAQIDAGAQAVMVFDSWGGVLADGCFQDFSLEYTRRVLAQLKRTGVDGQDVPRIVFTKGGGIWLDDMKDIDCEVLGLDWTAHLGKARAIVGGQVGGPGKALQGNIDPNVLFAPSAQIVTQVRAVLDSFGTPHTDKTTTGPTHIFNLGHGISQFTPPEHVAALVEAVHGYSRSLRQR</sequence>
<proteinExistence type="inferred from homology"/>
<gene>
    <name evidence="1" type="primary">hemE</name>
    <name type="ordered locus">Dtpsy_3134</name>
</gene>
<dbReference type="EC" id="4.1.1.37" evidence="1"/>
<dbReference type="EMBL" id="CP001392">
    <property type="protein sequence ID" value="ACM34567.1"/>
    <property type="molecule type" value="Genomic_DNA"/>
</dbReference>
<dbReference type="RefSeq" id="WP_015914393.1">
    <property type="nucleotide sequence ID" value="NC_011992.1"/>
</dbReference>
<dbReference type="SMR" id="B9MGH2"/>
<dbReference type="KEGG" id="dia:Dtpsy_3134"/>
<dbReference type="eggNOG" id="COG0407">
    <property type="taxonomic scope" value="Bacteria"/>
</dbReference>
<dbReference type="HOGENOM" id="CLU_040933_0_0_4"/>
<dbReference type="UniPathway" id="UPA00251">
    <property type="reaction ID" value="UER00321"/>
</dbReference>
<dbReference type="Proteomes" id="UP000000450">
    <property type="component" value="Chromosome"/>
</dbReference>
<dbReference type="GO" id="GO:0005829">
    <property type="term" value="C:cytosol"/>
    <property type="evidence" value="ECO:0007669"/>
    <property type="project" value="TreeGrafter"/>
</dbReference>
<dbReference type="GO" id="GO:0004853">
    <property type="term" value="F:uroporphyrinogen decarboxylase activity"/>
    <property type="evidence" value="ECO:0007669"/>
    <property type="project" value="UniProtKB-UniRule"/>
</dbReference>
<dbReference type="GO" id="GO:0019353">
    <property type="term" value="P:protoporphyrinogen IX biosynthetic process from glutamate"/>
    <property type="evidence" value="ECO:0007669"/>
    <property type="project" value="TreeGrafter"/>
</dbReference>
<dbReference type="CDD" id="cd00717">
    <property type="entry name" value="URO-D"/>
    <property type="match status" value="1"/>
</dbReference>
<dbReference type="FunFam" id="3.20.20.210:FF:000001">
    <property type="entry name" value="Uroporphyrinogen decarboxylase"/>
    <property type="match status" value="1"/>
</dbReference>
<dbReference type="Gene3D" id="3.20.20.210">
    <property type="match status" value="1"/>
</dbReference>
<dbReference type="HAMAP" id="MF_00218">
    <property type="entry name" value="URO_D"/>
    <property type="match status" value="1"/>
</dbReference>
<dbReference type="InterPro" id="IPR038071">
    <property type="entry name" value="UROD/MetE-like_sf"/>
</dbReference>
<dbReference type="InterPro" id="IPR006361">
    <property type="entry name" value="Uroporphyrinogen_deCO2ase_HemE"/>
</dbReference>
<dbReference type="InterPro" id="IPR000257">
    <property type="entry name" value="Uroporphyrinogen_deCOase"/>
</dbReference>
<dbReference type="NCBIfam" id="TIGR01464">
    <property type="entry name" value="hemE"/>
    <property type="match status" value="1"/>
</dbReference>
<dbReference type="PANTHER" id="PTHR21091">
    <property type="entry name" value="METHYLTETRAHYDROFOLATE:HOMOCYSTEINE METHYLTRANSFERASE RELATED"/>
    <property type="match status" value="1"/>
</dbReference>
<dbReference type="PANTHER" id="PTHR21091:SF169">
    <property type="entry name" value="UROPORPHYRINOGEN DECARBOXYLASE"/>
    <property type="match status" value="1"/>
</dbReference>
<dbReference type="Pfam" id="PF01208">
    <property type="entry name" value="URO-D"/>
    <property type="match status" value="1"/>
</dbReference>
<dbReference type="SUPFAM" id="SSF51726">
    <property type="entry name" value="UROD/MetE-like"/>
    <property type="match status" value="1"/>
</dbReference>
<dbReference type="PROSITE" id="PS00906">
    <property type="entry name" value="UROD_1"/>
    <property type="match status" value="1"/>
</dbReference>
<dbReference type="PROSITE" id="PS00907">
    <property type="entry name" value="UROD_2"/>
    <property type="match status" value="1"/>
</dbReference>